<reference key="1">
    <citation type="journal article" date="1973" name="Science">
        <title>Complete amino acid sequence of the Mu heavy chain of a human IgM immunoglobulin.</title>
        <authorList>
            <person name="Putnam F.W."/>
            <person name="Florent G."/>
            <person name="Paul C."/>
            <person name="Shinoda T."/>
            <person name="Shimizu A."/>
        </authorList>
    </citation>
    <scope>PROTEIN SEQUENCE</scope>
    <scope>DISULFIDE BONDS</scope>
    <scope>GLYCOSYLATION AT ASN-170: ASN-332; ASN-395; ASN-402 AND ASN-563</scope>
    <scope>PYROGLUTAMATE FORMATION AT GLN-1</scope>
</reference>
<reference key="2">
    <citation type="journal article" date="2006" name="Immunology">
        <title>The riddle of the dual expression of IgM and IgD.</title>
        <authorList>
            <person name="Geisberger R."/>
            <person name="Lamers M."/>
            <person name="Achatz G."/>
        </authorList>
    </citation>
    <scope>REVIEW ON FUNCTION AND SUBUNIT</scope>
</reference>
<reference key="3">
    <citation type="journal article" date="2007" name="Annu. Rev. Genet.">
        <title>Immunoglobulin somatic hypermutation.</title>
        <authorList>
            <person name="Teng G."/>
            <person name="Papavasiliou F.N."/>
        </authorList>
    </citation>
    <scope>REVIEW ON SOMATIC HYPERMUTATION</scope>
</reference>
<reference key="4">
    <citation type="journal article" date="2010" name="J. Allergy Clin. Immunol.">
        <title>Structure and function of immunoglobulins.</title>
        <authorList>
            <person name="Schroeder H.W. Jr."/>
            <person name="Cavacini L."/>
        </authorList>
    </citation>
    <scope>REVIEW ON IMMUNOGLOBULINS</scope>
</reference>
<reference key="5">
    <citation type="journal article" date="2012" name="Nat. Rev. Immunol.">
        <title>Molecular programming of B cell memory.</title>
        <authorList>
            <person name="McHeyzer-Williams M."/>
            <person name="Okitsu S."/>
            <person name="Wang N."/>
            <person name="McHeyzer-Williams L."/>
        </authorList>
    </citation>
    <scope>REVIEW ON FUNCTION</scope>
</reference>
<proteinExistence type="evidence at protein level"/>
<accession>P0DOX6</accession>
<comment type="function">
    <text evidence="4 5 6 7">Immunoglobulins, also known as antibodies, are membrane-bound or secreted glycoproteins produced by B lymphocytes. In the recognition phase of humoral immunity, the membrane-bound immunoglobulins serve as receptors which, upon binding of a specific antigen, trigger the clonal expansion and differentiation of B lymphocytes into immunoglobulins-secreting plasma cells. Secreted immunoglobulins mediate the effector phase of humoral immunity, which results in the elimination of bound antigens (PubMed:20176268, PubMed:22158414). The antigen binding site is formed by the variable domain of one heavy chain, together with that of its associated light chain. Thus, each immunoglobulin has two antigen binding sites with remarkable affinity for a particular antigen. The variable domains are assembled by a process called V-(D)-J rearrangement and can then be subjected to somatic hypermutations which, after exposure to antigen and selection, allow affinity maturation for a particular antigen (PubMed:17576170, PubMed:20176268). IgM antibodies play an important role in primary defense mechanisms. They have been shown to be involved in early recognition of external invaders like bacteria and viruses, cellular waste and modified self, as well as in recognition and elimination of precancerous and cancerous lesions. The membrane-bound form is found in the majority of normal B cells alongside with IgD. Membrane-bound IgM induces the phosphorylation of CD79A and CD79B by the Src family of protein tyrosine kinases. It may cause death of cells by apoptosis. It is also found in soluble form, which represents about 30% of the total serum immunoglobulins where it is found almost exclusively as a homopentamer. After the antigen binds to the B cell receptor, the secreted form is secreted in large amounts (, PubMed:16895553).</text>
</comment>
<comment type="subunit">
    <text evidence="4 6">Immunoglobulins are composed of two identical heavy chains and two identical light chains; disulfide-linked (PubMed:20176268). It is found almost exclusively as a homopentamer in the serum. Membrane-bound IgM molecules are non-covalently associated with heterodimer of CD79A and CD79B (PubMed:16895553).</text>
</comment>
<comment type="subcellular location">
    <subcellularLocation>
        <location evidence="6 7">Secreted</location>
    </subcellularLocation>
    <subcellularLocation>
        <location evidence="6 7">Cell membrane</location>
    </subcellularLocation>
</comment>
<comment type="caution">
    <text evidence="8">This sequence is an example of a full-length immunoglobulin mu heavy chain.</text>
</comment>
<sequence>QVTLTESGPALVKPKQPLTLTCTFSGFSLSTSRMRVSWIRRPPGKALEWLARIDDDDKFYWSTSLRTRLSISKNDSKNQVVLIMINVNPVDTATYYCARVVNSVMAGYYYYYMDVWGKGTTVTVSSGSASAPTLFPLVSCENSNPSSTVAVGCLAQDFLPDSITFSWKYNQSQKISSTRGFPSVLRGGKYAATSQVLLPSKDVMQGTDEHVCKWVQHPNGNKQKNVPLPVIAELPPKVSVFVPPRDGFFGNPRKSKLICQATGFSPRQVWSLREGKQVGSGVTTDQVQAEAKESGPTTYKVTSTLTIKESDWLGESMFTCRVDHRGLTFQQNASSMCVPDQDTAIRVFAIPPSFASIFLTKSTKLTCLVTDLTTYDSVTISWTREENGAVKTHTNISESHPNATFSAVGEASICEDDDWSGERFTCTVTHTDLPSPLKQTISRPKGVALHRPDVYLLPPAREQLNLRESATITCLVTGFSPADVFVQWMQRGEPLSPEKYVTSAPMPEPQAPGRYFAHSILTVSEEEWNTGQTYTCVVAHEALPNRVTERTVDKSTGKPTLYNVSLVMSDTAGTCY</sequence>
<feature type="chain" id="PRO_0000439286" description="Immunoglobulin mu heavy chain">
    <location>
        <begin position="1"/>
        <end position="576"/>
    </location>
</feature>
<feature type="domain" description="Ig-like 1" evidence="2">
    <location>
        <begin position="1"/>
        <end position="97"/>
    </location>
</feature>
<feature type="domain" description="Ig-like 2" evidence="2">
    <location>
        <begin position="132"/>
        <end position="212"/>
    </location>
</feature>
<feature type="domain" description="Ig-like 3" evidence="2">
    <location>
        <begin position="236"/>
        <end position="334"/>
    </location>
</feature>
<feature type="domain" description="Ig-like 4" evidence="2">
    <location>
        <begin position="352"/>
        <end position="442"/>
    </location>
</feature>
<feature type="domain" description="Ig-like 5" evidence="2">
    <location>
        <begin position="452"/>
        <end position="553"/>
    </location>
</feature>
<feature type="region of interest" description="Variable (V) domain, involved in antigen recognition" evidence="9">
    <location>
        <begin position="1"/>
        <end position="124"/>
    </location>
</feature>
<feature type="region of interest" description="Constant (C) domain" evidence="9">
    <location>
        <begin position="125"/>
        <end position="576"/>
    </location>
</feature>
<feature type="modified residue" description="Pyrrolidone carboxylic acid" evidence="3">
    <location>
        <position position="1"/>
    </location>
</feature>
<feature type="glycosylation site" description="N-linked (GlcNAc...) asparagine" evidence="1">
    <location>
        <position position="74"/>
    </location>
</feature>
<feature type="glycosylation site" description="N-linked (GlcNAc...) asparagine" evidence="3">
    <location>
        <position position="170"/>
    </location>
</feature>
<feature type="glycosylation site" description="N-linked (GlcNAc...) asparagine" evidence="3">
    <location>
        <position position="332"/>
    </location>
</feature>
<feature type="glycosylation site" description="N-linked (GlcNAc...) asparagine" evidence="3">
    <location>
        <position position="395"/>
    </location>
</feature>
<feature type="glycosylation site" description="N-linked (GlcNAc...) asparagine" evidence="3">
    <location>
        <position position="402"/>
    </location>
</feature>
<feature type="glycosylation site" description="N-linked (GlcNAc...) asparagine" evidence="3">
    <location>
        <position position="563"/>
    </location>
</feature>
<feature type="disulfide bond" evidence="3">
    <location>
        <begin position="22"/>
        <end position="97"/>
    </location>
</feature>
<feature type="disulfide bond" description="Interchain (with light chain)" evidence="3">
    <location>
        <position position="140"/>
    </location>
</feature>
<feature type="disulfide bond" evidence="3">
    <location>
        <begin position="153"/>
        <end position="212"/>
    </location>
</feature>
<feature type="disulfide bond" evidence="3">
    <location>
        <begin position="259"/>
        <end position="320"/>
    </location>
</feature>
<feature type="disulfide bond" description="Interchain (with heavy chain)" evidence="3">
    <location>
        <position position="337"/>
    </location>
</feature>
<feature type="disulfide bond" evidence="3">
    <location>
        <begin position="367"/>
        <end position="426"/>
    </location>
</feature>
<feature type="disulfide bond" evidence="3">
    <location>
        <begin position="474"/>
        <end position="536"/>
    </location>
</feature>
<feature type="disulfide bond" description="Interchain (with heavy chain)" evidence="3">
    <location>
        <position position="575"/>
    </location>
</feature>
<dbReference type="SMR" id="P0DOX6"/>
<dbReference type="iPTMnet" id="P0DOX6"/>
<dbReference type="PhosphoSitePlus" id="P0DOX6"/>
<dbReference type="jPOST" id="P0DOX6"/>
<dbReference type="SIGNOR" id="P0DOX6"/>
<dbReference type="Pharos" id="P0DOX6">
    <property type="development level" value="Tdark"/>
</dbReference>
<dbReference type="GO" id="GO:0005576">
    <property type="term" value="C:extracellular region"/>
    <property type="evidence" value="ECO:0007669"/>
    <property type="project" value="UniProtKB-SubCell"/>
</dbReference>
<dbReference type="GO" id="GO:0019814">
    <property type="term" value="C:immunoglobulin complex"/>
    <property type="evidence" value="ECO:0007669"/>
    <property type="project" value="UniProtKB-KW"/>
</dbReference>
<dbReference type="GO" id="GO:0005886">
    <property type="term" value="C:plasma membrane"/>
    <property type="evidence" value="ECO:0007669"/>
    <property type="project" value="UniProtKB-SubCell"/>
</dbReference>
<dbReference type="GO" id="GO:0002250">
    <property type="term" value="P:adaptive immune response"/>
    <property type="evidence" value="ECO:0007669"/>
    <property type="project" value="UniProtKB-KW"/>
</dbReference>
<dbReference type="CDD" id="cd21819">
    <property type="entry name" value="IgC1_CH1_IgM"/>
    <property type="match status" value="1"/>
</dbReference>
<dbReference type="CDD" id="cd16093">
    <property type="entry name" value="IgC1_CH2_Mu"/>
    <property type="match status" value="1"/>
</dbReference>
<dbReference type="CDD" id="cd07696">
    <property type="entry name" value="IgC1_CH3_IgAEM_CH2_IgG"/>
    <property type="match status" value="1"/>
</dbReference>
<dbReference type="CDD" id="cd05768">
    <property type="entry name" value="IgC1_CH3_IgAGD_CH4_IgAEM"/>
    <property type="match status" value="1"/>
</dbReference>
<dbReference type="FunFam" id="2.60.40.10:FF:001791">
    <property type="entry name" value="Ig gamma-2B chain C region"/>
    <property type="match status" value="1"/>
</dbReference>
<dbReference type="FunFam" id="2.60.40.10:FF:000998">
    <property type="entry name" value="Immunoglobulin heavy constant epsilon"/>
    <property type="match status" value="1"/>
</dbReference>
<dbReference type="FunFam" id="2.60.40.10:FF:000463">
    <property type="entry name" value="Immunoglobulin heavy constant gamma 1"/>
    <property type="match status" value="1"/>
</dbReference>
<dbReference type="FunFam" id="2.60.40.10:FF:001836">
    <property type="entry name" value="Immunoglobulin heavy constant mu"/>
    <property type="match status" value="1"/>
</dbReference>
<dbReference type="Gene3D" id="2.60.40.10">
    <property type="entry name" value="Immunoglobulins"/>
    <property type="match status" value="5"/>
</dbReference>
<dbReference type="InterPro" id="IPR007110">
    <property type="entry name" value="Ig-like_dom"/>
</dbReference>
<dbReference type="InterPro" id="IPR036179">
    <property type="entry name" value="Ig-like_dom_sf"/>
</dbReference>
<dbReference type="InterPro" id="IPR013783">
    <property type="entry name" value="Ig-like_fold"/>
</dbReference>
<dbReference type="InterPro" id="IPR003006">
    <property type="entry name" value="Ig/MHC_CS"/>
</dbReference>
<dbReference type="InterPro" id="IPR003597">
    <property type="entry name" value="Ig_C1-set"/>
</dbReference>
<dbReference type="InterPro" id="IPR003599">
    <property type="entry name" value="Ig_sub"/>
</dbReference>
<dbReference type="InterPro" id="IPR013106">
    <property type="entry name" value="Ig_V-set"/>
</dbReference>
<dbReference type="InterPro" id="IPR050380">
    <property type="entry name" value="Immune_Resp_Modulators"/>
</dbReference>
<dbReference type="PANTHER" id="PTHR23411">
    <property type="entry name" value="TAPASIN"/>
    <property type="match status" value="1"/>
</dbReference>
<dbReference type="Pfam" id="PF07654">
    <property type="entry name" value="C1-set"/>
    <property type="match status" value="4"/>
</dbReference>
<dbReference type="Pfam" id="PF07686">
    <property type="entry name" value="V-set"/>
    <property type="match status" value="1"/>
</dbReference>
<dbReference type="SMART" id="SM00409">
    <property type="entry name" value="IG"/>
    <property type="match status" value="2"/>
</dbReference>
<dbReference type="SMART" id="SM00407">
    <property type="entry name" value="IGc1"/>
    <property type="match status" value="4"/>
</dbReference>
<dbReference type="SMART" id="SM00406">
    <property type="entry name" value="IGv"/>
    <property type="match status" value="1"/>
</dbReference>
<dbReference type="SUPFAM" id="SSF48726">
    <property type="entry name" value="Immunoglobulin"/>
    <property type="match status" value="5"/>
</dbReference>
<dbReference type="PROSITE" id="PS50835">
    <property type="entry name" value="IG_LIKE"/>
    <property type="match status" value="5"/>
</dbReference>
<dbReference type="PROSITE" id="PS00290">
    <property type="entry name" value="IG_MHC"/>
    <property type="match status" value="3"/>
</dbReference>
<name>IGM_HUMAN</name>
<keyword id="KW-1064">Adaptive immunity</keyword>
<keyword id="KW-1003">Cell membrane</keyword>
<keyword id="KW-0903">Direct protein sequencing</keyword>
<keyword id="KW-1015">Disulfide bond</keyword>
<keyword id="KW-0325">Glycoprotein</keyword>
<keyword id="KW-0391">Immunity</keyword>
<keyword id="KW-1280">Immunoglobulin</keyword>
<keyword id="KW-0393">Immunoglobulin domain</keyword>
<keyword id="KW-0472">Membrane</keyword>
<keyword id="KW-0873">Pyrrolidone carboxylic acid</keyword>
<keyword id="KW-0677">Repeat</keyword>
<keyword id="KW-0964">Secreted</keyword>
<organism>
    <name type="scientific">Homo sapiens</name>
    <name type="common">Human</name>
    <dbReference type="NCBI Taxonomy" id="9606"/>
    <lineage>
        <taxon>Eukaryota</taxon>
        <taxon>Metazoa</taxon>
        <taxon>Chordata</taxon>
        <taxon>Craniata</taxon>
        <taxon>Vertebrata</taxon>
        <taxon>Euteleostomi</taxon>
        <taxon>Mammalia</taxon>
        <taxon>Eutheria</taxon>
        <taxon>Euarchontoglires</taxon>
        <taxon>Primates</taxon>
        <taxon>Haplorrhini</taxon>
        <taxon>Catarrhini</taxon>
        <taxon>Hominidae</taxon>
        <taxon>Homo</taxon>
    </lineage>
</organism>
<evidence type="ECO:0000255" key="1"/>
<evidence type="ECO:0000255" key="2">
    <source>
        <dbReference type="PROSITE-ProRule" id="PRU00114"/>
    </source>
</evidence>
<evidence type="ECO:0000269" key="3">
    <source>
    </source>
</evidence>
<evidence type="ECO:0000303" key="4">
    <source>
    </source>
</evidence>
<evidence type="ECO:0000303" key="5">
    <source>
    </source>
</evidence>
<evidence type="ECO:0000303" key="6">
    <source>
    </source>
</evidence>
<evidence type="ECO:0000303" key="7">
    <source>
    </source>
</evidence>
<evidence type="ECO:0000305" key="8"/>
<evidence type="ECO:0000305" key="9">
    <source>
    </source>
</evidence>
<protein>
    <recommendedName>
        <fullName evidence="8">Immunoglobulin mu heavy chain</fullName>
    </recommendedName>
    <alternativeName>
        <fullName evidence="9">Immunoglobulin mu heavy chain OU</fullName>
    </alternativeName>
</protein>